<evidence type="ECO:0000250" key="1"/>
<evidence type="ECO:0000255" key="2">
    <source>
        <dbReference type="HAMAP-Rule" id="MF_00492"/>
    </source>
</evidence>
<feature type="chain" id="PRO_1000014487" description="Transaldolase">
    <location>
        <begin position="1"/>
        <end position="317"/>
    </location>
</feature>
<feature type="active site" description="Schiff-base intermediate with substrate" evidence="2">
    <location>
        <position position="126"/>
    </location>
</feature>
<comment type="function">
    <text evidence="2">Transaldolase is important for the balance of metabolites in the pentose-phosphate pathway.</text>
</comment>
<comment type="catalytic activity">
    <reaction evidence="2">
        <text>D-sedoheptulose 7-phosphate + D-glyceraldehyde 3-phosphate = D-erythrose 4-phosphate + beta-D-fructose 6-phosphate</text>
        <dbReference type="Rhea" id="RHEA:17053"/>
        <dbReference type="ChEBI" id="CHEBI:16897"/>
        <dbReference type="ChEBI" id="CHEBI:57483"/>
        <dbReference type="ChEBI" id="CHEBI:57634"/>
        <dbReference type="ChEBI" id="CHEBI:59776"/>
        <dbReference type="EC" id="2.2.1.2"/>
    </reaction>
</comment>
<comment type="pathway">
    <text evidence="2">Carbohydrate degradation; pentose phosphate pathway; D-glyceraldehyde 3-phosphate and beta-D-fructose 6-phosphate from D-ribose 5-phosphate and D-xylulose 5-phosphate (non-oxidative stage): step 2/3.</text>
</comment>
<comment type="subunit">
    <text evidence="1">Homodimer.</text>
</comment>
<comment type="subcellular location">
    <subcellularLocation>
        <location evidence="2">Cytoplasm</location>
    </subcellularLocation>
</comment>
<comment type="similarity">
    <text evidence="2">Belongs to the transaldolase family. Type 1 subfamily.</text>
</comment>
<organism>
    <name type="scientific">Burkholderia orbicola (strain AU 1054)</name>
    <dbReference type="NCBI Taxonomy" id="331271"/>
    <lineage>
        <taxon>Bacteria</taxon>
        <taxon>Pseudomonadati</taxon>
        <taxon>Pseudomonadota</taxon>
        <taxon>Betaproteobacteria</taxon>
        <taxon>Burkholderiales</taxon>
        <taxon>Burkholderiaceae</taxon>
        <taxon>Burkholderia</taxon>
        <taxon>Burkholderia cepacia complex</taxon>
        <taxon>Burkholderia orbicola</taxon>
    </lineage>
</organism>
<protein>
    <recommendedName>
        <fullName evidence="2">Transaldolase</fullName>
        <ecNumber evidence="2">2.2.1.2</ecNumber>
    </recommendedName>
</protein>
<keyword id="KW-0963">Cytoplasm</keyword>
<keyword id="KW-0570">Pentose shunt</keyword>
<keyword id="KW-0704">Schiff base</keyword>
<keyword id="KW-0808">Transferase</keyword>
<gene>
    <name evidence="2" type="primary">tal</name>
    <name type="ordered locus">Bcen_1723</name>
</gene>
<sequence>MTTALDQLKQYTTVVADTGDFQQLAQYKPQDATTNPSLILKAVQKDAYKPILEKTVRDHRNESTDFIIDRLLIAFGTEILKLIPGRVSTEVDARLSFDTQRSIEKGRELIKLYEAAGIGRERILIKLASTWEGIRAAEVLQKEGIKCNMTLLFSLVQAAACAEAGAQLISPFVGRIYDWYKKQAGAEWNEARDGGANDPGVQSVRRIYTYYKTFGYKTEVMGASFRTTSQITELAGCDLLTISPDLLQKLQESNETVARKLSPETLQDKPAERVAIDEASFRFQLNDEAMATEKLAEGIRVFAADAVKLEKLIDALR</sequence>
<proteinExistence type="inferred from homology"/>
<dbReference type="EC" id="2.2.1.2" evidence="2"/>
<dbReference type="EMBL" id="CP000378">
    <property type="protein sequence ID" value="ABF76627.1"/>
    <property type="molecule type" value="Genomic_DNA"/>
</dbReference>
<dbReference type="SMR" id="Q1BUS8"/>
<dbReference type="HOGENOM" id="CLU_047470_0_1_4"/>
<dbReference type="UniPathway" id="UPA00115">
    <property type="reaction ID" value="UER00414"/>
</dbReference>
<dbReference type="GO" id="GO:0005737">
    <property type="term" value="C:cytoplasm"/>
    <property type="evidence" value="ECO:0007669"/>
    <property type="project" value="UniProtKB-SubCell"/>
</dbReference>
<dbReference type="GO" id="GO:0004801">
    <property type="term" value="F:transaldolase activity"/>
    <property type="evidence" value="ECO:0000250"/>
    <property type="project" value="UniProtKB"/>
</dbReference>
<dbReference type="GO" id="GO:0005975">
    <property type="term" value="P:carbohydrate metabolic process"/>
    <property type="evidence" value="ECO:0007669"/>
    <property type="project" value="InterPro"/>
</dbReference>
<dbReference type="GO" id="GO:0006098">
    <property type="term" value="P:pentose-phosphate shunt"/>
    <property type="evidence" value="ECO:0007669"/>
    <property type="project" value="UniProtKB-UniRule"/>
</dbReference>
<dbReference type="CDD" id="cd00957">
    <property type="entry name" value="Transaldolase_TalAB"/>
    <property type="match status" value="1"/>
</dbReference>
<dbReference type="FunFam" id="3.20.20.70:FF:000002">
    <property type="entry name" value="Transaldolase"/>
    <property type="match status" value="1"/>
</dbReference>
<dbReference type="Gene3D" id="3.20.20.70">
    <property type="entry name" value="Aldolase class I"/>
    <property type="match status" value="1"/>
</dbReference>
<dbReference type="HAMAP" id="MF_00492">
    <property type="entry name" value="Transaldolase_1"/>
    <property type="match status" value="1"/>
</dbReference>
<dbReference type="InterPro" id="IPR013785">
    <property type="entry name" value="Aldolase_TIM"/>
</dbReference>
<dbReference type="InterPro" id="IPR001585">
    <property type="entry name" value="TAL/FSA"/>
</dbReference>
<dbReference type="InterPro" id="IPR004730">
    <property type="entry name" value="Transaldolase_1"/>
</dbReference>
<dbReference type="InterPro" id="IPR018225">
    <property type="entry name" value="Transaldolase_AS"/>
</dbReference>
<dbReference type="NCBIfam" id="NF009001">
    <property type="entry name" value="PRK12346.1"/>
    <property type="match status" value="1"/>
</dbReference>
<dbReference type="NCBIfam" id="TIGR00874">
    <property type="entry name" value="talAB"/>
    <property type="match status" value="1"/>
</dbReference>
<dbReference type="PANTHER" id="PTHR10683">
    <property type="entry name" value="TRANSALDOLASE"/>
    <property type="match status" value="1"/>
</dbReference>
<dbReference type="PANTHER" id="PTHR10683:SF18">
    <property type="entry name" value="TRANSALDOLASE"/>
    <property type="match status" value="1"/>
</dbReference>
<dbReference type="Pfam" id="PF00923">
    <property type="entry name" value="TAL_FSA"/>
    <property type="match status" value="1"/>
</dbReference>
<dbReference type="SUPFAM" id="SSF51569">
    <property type="entry name" value="Aldolase"/>
    <property type="match status" value="1"/>
</dbReference>
<dbReference type="PROSITE" id="PS01054">
    <property type="entry name" value="TRANSALDOLASE_1"/>
    <property type="match status" value="1"/>
</dbReference>
<dbReference type="PROSITE" id="PS00958">
    <property type="entry name" value="TRANSALDOLASE_2"/>
    <property type="match status" value="1"/>
</dbReference>
<reference key="1">
    <citation type="submission" date="2006-05" db="EMBL/GenBank/DDBJ databases">
        <title>Complete sequence of chromosome 1 of Burkholderia cenocepacia AU 1054.</title>
        <authorList>
            <consortium name="US DOE Joint Genome Institute"/>
            <person name="Copeland A."/>
            <person name="Lucas S."/>
            <person name="Lapidus A."/>
            <person name="Barry K."/>
            <person name="Detter J.C."/>
            <person name="Glavina del Rio T."/>
            <person name="Hammon N."/>
            <person name="Israni S."/>
            <person name="Dalin E."/>
            <person name="Tice H."/>
            <person name="Pitluck S."/>
            <person name="Chain P."/>
            <person name="Malfatti S."/>
            <person name="Shin M."/>
            <person name="Vergez L."/>
            <person name="Schmutz J."/>
            <person name="Larimer F."/>
            <person name="Land M."/>
            <person name="Hauser L."/>
            <person name="Kyrpides N."/>
            <person name="Lykidis A."/>
            <person name="LiPuma J.J."/>
            <person name="Konstantinidis K."/>
            <person name="Tiedje J.M."/>
            <person name="Richardson P."/>
        </authorList>
    </citation>
    <scope>NUCLEOTIDE SEQUENCE [LARGE SCALE GENOMIC DNA]</scope>
    <source>
        <strain>AU 1054</strain>
    </source>
</reference>
<name>TAL_BURO1</name>
<accession>Q1BUS8</accession>